<protein>
    <recommendedName>
        <fullName evidence="1">UPF0352 protein Shal_2512</fullName>
    </recommendedName>
</protein>
<accession>B0TK50</accession>
<organism>
    <name type="scientific">Shewanella halifaxensis (strain HAW-EB4)</name>
    <dbReference type="NCBI Taxonomy" id="458817"/>
    <lineage>
        <taxon>Bacteria</taxon>
        <taxon>Pseudomonadati</taxon>
        <taxon>Pseudomonadota</taxon>
        <taxon>Gammaproteobacteria</taxon>
        <taxon>Alteromonadales</taxon>
        <taxon>Shewanellaceae</taxon>
        <taxon>Shewanella</taxon>
    </lineage>
</organism>
<proteinExistence type="inferred from homology"/>
<evidence type="ECO:0000255" key="1">
    <source>
        <dbReference type="HAMAP-Rule" id="MF_00816"/>
    </source>
</evidence>
<feature type="chain" id="PRO_1000083821" description="UPF0352 protein Shal_2512">
    <location>
        <begin position="1"/>
        <end position="72"/>
    </location>
</feature>
<comment type="similarity">
    <text evidence="1">Belongs to the UPF0352 family.</text>
</comment>
<dbReference type="EMBL" id="CP000931">
    <property type="protein sequence ID" value="ABZ77069.1"/>
    <property type="molecule type" value="Genomic_DNA"/>
</dbReference>
<dbReference type="RefSeq" id="WP_012277597.1">
    <property type="nucleotide sequence ID" value="NC_010334.1"/>
</dbReference>
<dbReference type="SMR" id="B0TK50"/>
<dbReference type="STRING" id="458817.Shal_2512"/>
<dbReference type="KEGG" id="shl:Shal_2512"/>
<dbReference type="eggNOG" id="COG3082">
    <property type="taxonomic scope" value="Bacteria"/>
</dbReference>
<dbReference type="HOGENOM" id="CLU_175457_0_0_6"/>
<dbReference type="OrthoDB" id="5771474at2"/>
<dbReference type="Proteomes" id="UP000001317">
    <property type="component" value="Chromosome"/>
</dbReference>
<dbReference type="Gene3D" id="1.10.3390.10">
    <property type="entry name" value="YejL-like"/>
    <property type="match status" value="1"/>
</dbReference>
<dbReference type="HAMAP" id="MF_00816">
    <property type="entry name" value="UPF0352"/>
    <property type="match status" value="1"/>
</dbReference>
<dbReference type="InterPro" id="IPR009857">
    <property type="entry name" value="UPF0352"/>
</dbReference>
<dbReference type="InterPro" id="IPR023202">
    <property type="entry name" value="YejL_sf"/>
</dbReference>
<dbReference type="NCBIfam" id="NF010242">
    <property type="entry name" value="PRK13689.1"/>
    <property type="match status" value="1"/>
</dbReference>
<dbReference type="Pfam" id="PF07208">
    <property type="entry name" value="DUF1414"/>
    <property type="match status" value="1"/>
</dbReference>
<dbReference type="PIRSF" id="PIRSF006188">
    <property type="entry name" value="UCP006188"/>
    <property type="match status" value="1"/>
</dbReference>
<dbReference type="SUPFAM" id="SSF158651">
    <property type="entry name" value="YejL-like"/>
    <property type="match status" value="1"/>
</dbReference>
<reference key="1">
    <citation type="submission" date="2008-01" db="EMBL/GenBank/DDBJ databases">
        <title>Complete sequence of Shewanella halifaxensis HAW-EB4.</title>
        <authorList>
            <consortium name="US DOE Joint Genome Institute"/>
            <person name="Copeland A."/>
            <person name="Lucas S."/>
            <person name="Lapidus A."/>
            <person name="Glavina del Rio T."/>
            <person name="Dalin E."/>
            <person name="Tice H."/>
            <person name="Bruce D."/>
            <person name="Goodwin L."/>
            <person name="Pitluck S."/>
            <person name="Sims D."/>
            <person name="Brettin T."/>
            <person name="Detter J.C."/>
            <person name="Han C."/>
            <person name="Kuske C.R."/>
            <person name="Schmutz J."/>
            <person name="Larimer F."/>
            <person name="Land M."/>
            <person name="Hauser L."/>
            <person name="Kyrpides N."/>
            <person name="Kim E."/>
            <person name="Zhao J.-S."/>
            <person name="Richardson P."/>
        </authorList>
    </citation>
    <scope>NUCLEOTIDE SEQUENCE [LARGE SCALE GENOMIC DNA]</scope>
    <source>
        <strain>HAW-EB4</strain>
    </source>
</reference>
<sequence length="72" mass="7866">MAIQSKYSNTQVESIIAELLAVLEKHQAPTDLSLMALGNCVTHLLQNKVPAESRKVVTEQFAKALSQSVKTN</sequence>
<gene>
    <name type="ordered locus">Shal_2512</name>
</gene>
<name>Y2512_SHEHH</name>